<sequence>MTDKPKLHILLCAPRGFCAGVVRAIDAVEQALRLYGAPVYVRHEIVHNKFVVEGLKAKGAIFVEELDEVPDTDKPVIFSAHGVPKSIPAEAQSRNIFAIDATCPLVTKVHREAELHHNNGRQVLLVGHAGHPEVVGTLGQLPEGSILLVQTPGEIETLQVKDEKNLAYVTQTTLSVDDTRNMVEALTKRFPEIIGPHREDICYATTNRQEAVKRIAPIVDALLVVGSSNSSNSQRLREVAERSGCKLARLVLRADDVEWDLFSNISSLGITAGASAPEVLVEEIMAAFAERFELEVETVSTADEGVFFPLPRELRQAAS</sequence>
<gene>
    <name evidence="1" type="primary">ispH</name>
    <name type="ordered locus">Bind_1904</name>
</gene>
<protein>
    <recommendedName>
        <fullName evidence="1">4-hydroxy-3-methylbut-2-enyl diphosphate reductase</fullName>
        <shortName evidence="1">HMBPP reductase</shortName>
        <ecNumber evidence="1">1.17.7.4</ecNumber>
    </recommendedName>
</protein>
<feature type="chain" id="PRO_1000098934" description="4-hydroxy-3-methylbut-2-enyl diphosphate reductase">
    <location>
        <begin position="1"/>
        <end position="319"/>
    </location>
</feature>
<feature type="active site" description="Proton donor" evidence="1">
    <location>
        <position position="133"/>
    </location>
</feature>
<feature type="binding site" evidence="1">
    <location>
        <position position="18"/>
    </location>
    <ligand>
        <name>[4Fe-4S] cluster</name>
        <dbReference type="ChEBI" id="CHEBI:49883"/>
    </ligand>
</feature>
<feature type="binding site" evidence="1">
    <location>
        <position position="47"/>
    </location>
    <ligand>
        <name>(2E)-4-hydroxy-3-methylbut-2-enyl diphosphate</name>
        <dbReference type="ChEBI" id="CHEBI:128753"/>
    </ligand>
</feature>
<feature type="binding site" evidence="1">
    <location>
        <position position="47"/>
    </location>
    <ligand>
        <name>dimethylallyl diphosphate</name>
        <dbReference type="ChEBI" id="CHEBI:57623"/>
    </ligand>
</feature>
<feature type="binding site" evidence="1">
    <location>
        <position position="47"/>
    </location>
    <ligand>
        <name>isopentenyl diphosphate</name>
        <dbReference type="ChEBI" id="CHEBI:128769"/>
    </ligand>
</feature>
<feature type="binding site" evidence="1">
    <location>
        <position position="81"/>
    </location>
    <ligand>
        <name>(2E)-4-hydroxy-3-methylbut-2-enyl diphosphate</name>
        <dbReference type="ChEBI" id="CHEBI:128753"/>
    </ligand>
</feature>
<feature type="binding site" evidence="1">
    <location>
        <position position="81"/>
    </location>
    <ligand>
        <name>dimethylallyl diphosphate</name>
        <dbReference type="ChEBI" id="CHEBI:57623"/>
    </ligand>
</feature>
<feature type="binding site" evidence="1">
    <location>
        <position position="81"/>
    </location>
    <ligand>
        <name>isopentenyl diphosphate</name>
        <dbReference type="ChEBI" id="CHEBI:128769"/>
    </ligand>
</feature>
<feature type="binding site" evidence="1">
    <location>
        <position position="103"/>
    </location>
    <ligand>
        <name>[4Fe-4S] cluster</name>
        <dbReference type="ChEBI" id="CHEBI:49883"/>
    </ligand>
</feature>
<feature type="binding site" evidence="1">
    <location>
        <position position="131"/>
    </location>
    <ligand>
        <name>(2E)-4-hydroxy-3-methylbut-2-enyl diphosphate</name>
        <dbReference type="ChEBI" id="CHEBI:128753"/>
    </ligand>
</feature>
<feature type="binding site" evidence="1">
    <location>
        <position position="131"/>
    </location>
    <ligand>
        <name>dimethylallyl diphosphate</name>
        <dbReference type="ChEBI" id="CHEBI:57623"/>
    </ligand>
</feature>
<feature type="binding site" evidence="1">
    <location>
        <position position="131"/>
    </location>
    <ligand>
        <name>isopentenyl diphosphate</name>
        <dbReference type="ChEBI" id="CHEBI:128769"/>
    </ligand>
</feature>
<feature type="binding site" evidence="1">
    <location>
        <position position="172"/>
    </location>
    <ligand>
        <name>(2E)-4-hydroxy-3-methylbut-2-enyl diphosphate</name>
        <dbReference type="ChEBI" id="CHEBI:128753"/>
    </ligand>
</feature>
<feature type="binding site" evidence="1">
    <location>
        <position position="202"/>
    </location>
    <ligand>
        <name>[4Fe-4S] cluster</name>
        <dbReference type="ChEBI" id="CHEBI:49883"/>
    </ligand>
</feature>
<feature type="binding site" evidence="1">
    <location>
        <position position="230"/>
    </location>
    <ligand>
        <name>(2E)-4-hydroxy-3-methylbut-2-enyl diphosphate</name>
        <dbReference type="ChEBI" id="CHEBI:128753"/>
    </ligand>
</feature>
<feature type="binding site" evidence="1">
    <location>
        <position position="230"/>
    </location>
    <ligand>
        <name>dimethylallyl diphosphate</name>
        <dbReference type="ChEBI" id="CHEBI:57623"/>
    </ligand>
</feature>
<feature type="binding site" evidence="1">
    <location>
        <position position="230"/>
    </location>
    <ligand>
        <name>isopentenyl diphosphate</name>
        <dbReference type="ChEBI" id="CHEBI:128769"/>
    </ligand>
</feature>
<feature type="binding site" evidence="1">
    <location>
        <position position="231"/>
    </location>
    <ligand>
        <name>(2E)-4-hydroxy-3-methylbut-2-enyl diphosphate</name>
        <dbReference type="ChEBI" id="CHEBI:128753"/>
    </ligand>
</feature>
<feature type="binding site" evidence="1">
    <location>
        <position position="231"/>
    </location>
    <ligand>
        <name>dimethylallyl diphosphate</name>
        <dbReference type="ChEBI" id="CHEBI:57623"/>
    </ligand>
</feature>
<feature type="binding site" evidence="1">
    <location>
        <position position="231"/>
    </location>
    <ligand>
        <name>isopentenyl diphosphate</name>
        <dbReference type="ChEBI" id="CHEBI:128769"/>
    </ligand>
</feature>
<feature type="binding site" evidence="1">
    <location>
        <position position="232"/>
    </location>
    <ligand>
        <name>(2E)-4-hydroxy-3-methylbut-2-enyl diphosphate</name>
        <dbReference type="ChEBI" id="CHEBI:128753"/>
    </ligand>
</feature>
<feature type="binding site" evidence="1">
    <location>
        <position position="232"/>
    </location>
    <ligand>
        <name>dimethylallyl diphosphate</name>
        <dbReference type="ChEBI" id="CHEBI:57623"/>
    </ligand>
</feature>
<feature type="binding site" evidence="1">
    <location>
        <position position="232"/>
    </location>
    <ligand>
        <name>isopentenyl diphosphate</name>
        <dbReference type="ChEBI" id="CHEBI:128769"/>
    </ligand>
</feature>
<feature type="binding site" evidence="1">
    <location>
        <position position="275"/>
    </location>
    <ligand>
        <name>(2E)-4-hydroxy-3-methylbut-2-enyl diphosphate</name>
        <dbReference type="ChEBI" id="CHEBI:128753"/>
    </ligand>
</feature>
<feature type="binding site" evidence="1">
    <location>
        <position position="275"/>
    </location>
    <ligand>
        <name>dimethylallyl diphosphate</name>
        <dbReference type="ChEBI" id="CHEBI:57623"/>
    </ligand>
</feature>
<feature type="binding site" evidence="1">
    <location>
        <position position="275"/>
    </location>
    <ligand>
        <name>isopentenyl diphosphate</name>
        <dbReference type="ChEBI" id="CHEBI:128769"/>
    </ligand>
</feature>
<accession>B2IED0</accession>
<proteinExistence type="inferred from homology"/>
<comment type="function">
    <text evidence="1">Catalyzes the conversion of 1-hydroxy-2-methyl-2-(E)-butenyl 4-diphosphate (HMBPP) into a mixture of isopentenyl diphosphate (IPP) and dimethylallyl diphosphate (DMAPP). Acts in the terminal step of the DOXP/MEP pathway for isoprenoid precursor biosynthesis.</text>
</comment>
<comment type="catalytic activity">
    <reaction evidence="1">
        <text>isopentenyl diphosphate + 2 oxidized [2Fe-2S]-[ferredoxin] + H2O = (2E)-4-hydroxy-3-methylbut-2-enyl diphosphate + 2 reduced [2Fe-2S]-[ferredoxin] + 2 H(+)</text>
        <dbReference type="Rhea" id="RHEA:24488"/>
        <dbReference type="Rhea" id="RHEA-COMP:10000"/>
        <dbReference type="Rhea" id="RHEA-COMP:10001"/>
        <dbReference type="ChEBI" id="CHEBI:15377"/>
        <dbReference type="ChEBI" id="CHEBI:15378"/>
        <dbReference type="ChEBI" id="CHEBI:33737"/>
        <dbReference type="ChEBI" id="CHEBI:33738"/>
        <dbReference type="ChEBI" id="CHEBI:128753"/>
        <dbReference type="ChEBI" id="CHEBI:128769"/>
        <dbReference type="EC" id="1.17.7.4"/>
    </reaction>
</comment>
<comment type="catalytic activity">
    <reaction evidence="1">
        <text>dimethylallyl diphosphate + 2 oxidized [2Fe-2S]-[ferredoxin] + H2O = (2E)-4-hydroxy-3-methylbut-2-enyl diphosphate + 2 reduced [2Fe-2S]-[ferredoxin] + 2 H(+)</text>
        <dbReference type="Rhea" id="RHEA:24825"/>
        <dbReference type="Rhea" id="RHEA-COMP:10000"/>
        <dbReference type="Rhea" id="RHEA-COMP:10001"/>
        <dbReference type="ChEBI" id="CHEBI:15377"/>
        <dbReference type="ChEBI" id="CHEBI:15378"/>
        <dbReference type="ChEBI" id="CHEBI:33737"/>
        <dbReference type="ChEBI" id="CHEBI:33738"/>
        <dbReference type="ChEBI" id="CHEBI:57623"/>
        <dbReference type="ChEBI" id="CHEBI:128753"/>
        <dbReference type="EC" id="1.17.7.4"/>
    </reaction>
</comment>
<comment type="cofactor">
    <cofactor evidence="1">
        <name>[4Fe-4S] cluster</name>
        <dbReference type="ChEBI" id="CHEBI:49883"/>
    </cofactor>
    <text evidence="1">Binds 1 [4Fe-4S] cluster per subunit.</text>
</comment>
<comment type="pathway">
    <text evidence="1">Isoprenoid biosynthesis; dimethylallyl diphosphate biosynthesis; dimethylallyl diphosphate from (2E)-4-hydroxy-3-methylbutenyl diphosphate: step 1/1.</text>
</comment>
<comment type="pathway">
    <text evidence="1">Isoprenoid biosynthesis; isopentenyl diphosphate biosynthesis via DXP pathway; isopentenyl diphosphate from 1-deoxy-D-xylulose 5-phosphate: step 6/6.</text>
</comment>
<comment type="similarity">
    <text evidence="1">Belongs to the IspH family.</text>
</comment>
<evidence type="ECO:0000255" key="1">
    <source>
        <dbReference type="HAMAP-Rule" id="MF_00191"/>
    </source>
</evidence>
<organism>
    <name type="scientific">Beijerinckia indica subsp. indica (strain ATCC 9039 / DSM 1715 / NCIMB 8712)</name>
    <dbReference type="NCBI Taxonomy" id="395963"/>
    <lineage>
        <taxon>Bacteria</taxon>
        <taxon>Pseudomonadati</taxon>
        <taxon>Pseudomonadota</taxon>
        <taxon>Alphaproteobacteria</taxon>
        <taxon>Hyphomicrobiales</taxon>
        <taxon>Beijerinckiaceae</taxon>
        <taxon>Beijerinckia</taxon>
    </lineage>
</organism>
<dbReference type="EC" id="1.17.7.4" evidence="1"/>
<dbReference type="EMBL" id="CP001016">
    <property type="protein sequence ID" value="ACB95528.1"/>
    <property type="molecule type" value="Genomic_DNA"/>
</dbReference>
<dbReference type="RefSeq" id="WP_012384885.1">
    <property type="nucleotide sequence ID" value="NC_010581.1"/>
</dbReference>
<dbReference type="SMR" id="B2IED0"/>
<dbReference type="STRING" id="395963.Bind_1904"/>
<dbReference type="KEGG" id="bid:Bind_1904"/>
<dbReference type="eggNOG" id="COG0761">
    <property type="taxonomic scope" value="Bacteria"/>
</dbReference>
<dbReference type="HOGENOM" id="CLU_027486_1_0_5"/>
<dbReference type="OrthoDB" id="9804068at2"/>
<dbReference type="UniPathway" id="UPA00056">
    <property type="reaction ID" value="UER00097"/>
</dbReference>
<dbReference type="UniPathway" id="UPA00059">
    <property type="reaction ID" value="UER00105"/>
</dbReference>
<dbReference type="Proteomes" id="UP000001695">
    <property type="component" value="Chromosome"/>
</dbReference>
<dbReference type="GO" id="GO:0051539">
    <property type="term" value="F:4 iron, 4 sulfur cluster binding"/>
    <property type="evidence" value="ECO:0007669"/>
    <property type="project" value="UniProtKB-UniRule"/>
</dbReference>
<dbReference type="GO" id="GO:0051745">
    <property type="term" value="F:4-hydroxy-3-methylbut-2-enyl diphosphate reductase activity"/>
    <property type="evidence" value="ECO:0007669"/>
    <property type="project" value="UniProtKB-UniRule"/>
</dbReference>
<dbReference type="GO" id="GO:0046872">
    <property type="term" value="F:metal ion binding"/>
    <property type="evidence" value="ECO:0007669"/>
    <property type="project" value="UniProtKB-KW"/>
</dbReference>
<dbReference type="GO" id="GO:0050992">
    <property type="term" value="P:dimethylallyl diphosphate biosynthetic process"/>
    <property type="evidence" value="ECO:0007669"/>
    <property type="project" value="UniProtKB-UniRule"/>
</dbReference>
<dbReference type="GO" id="GO:0019288">
    <property type="term" value="P:isopentenyl diphosphate biosynthetic process, methylerythritol 4-phosphate pathway"/>
    <property type="evidence" value="ECO:0007669"/>
    <property type="project" value="UniProtKB-UniRule"/>
</dbReference>
<dbReference type="GO" id="GO:0016114">
    <property type="term" value="P:terpenoid biosynthetic process"/>
    <property type="evidence" value="ECO:0007669"/>
    <property type="project" value="UniProtKB-UniRule"/>
</dbReference>
<dbReference type="CDD" id="cd13944">
    <property type="entry name" value="lytB_ispH"/>
    <property type="match status" value="1"/>
</dbReference>
<dbReference type="Gene3D" id="3.40.50.11270">
    <property type="match status" value="1"/>
</dbReference>
<dbReference type="Gene3D" id="3.40.1010.20">
    <property type="entry name" value="4-hydroxy-3-methylbut-2-enyl diphosphate reductase, catalytic domain"/>
    <property type="match status" value="2"/>
</dbReference>
<dbReference type="HAMAP" id="MF_00191">
    <property type="entry name" value="IspH"/>
    <property type="match status" value="1"/>
</dbReference>
<dbReference type="InterPro" id="IPR003451">
    <property type="entry name" value="LytB/IspH"/>
</dbReference>
<dbReference type="NCBIfam" id="TIGR00216">
    <property type="entry name" value="ispH_lytB"/>
    <property type="match status" value="1"/>
</dbReference>
<dbReference type="NCBIfam" id="NF002188">
    <property type="entry name" value="PRK01045.1-2"/>
    <property type="match status" value="1"/>
</dbReference>
<dbReference type="NCBIfam" id="NF002190">
    <property type="entry name" value="PRK01045.1-4"/>
    <property type="match status" value="1"/>
</dbReference>
<dbReference type="PANTHER" id="PTHR30426">
    <property type="entry name" value="4-HYDROXY-3-METHYLBUT-2-ENYL DIPHOSPHATE REDUCTASE"/>
    <property type="match status" value="1"/>
</dbReference>
<dbReference type="PANTHER" id="PTHR30426:SF0">
    <property type="entry name" value="4-HYDROXY-3-METHYLBUT-2-ENYL DIPHOSPHATE REDUCTASE"/>
    <property type="match status" value="1"/>
</dbReference>
<dbReference type="Pfam" id="PF02401">
    <property type="entry name" value="LYTB"/>
    <property type="match status" value="1"/>
</dbReference>
<reference key="1">
    <citation type="journal article" date="2010" name="J. Bacteriol.">
        <title>Complete genome sequence of Beijerinckia indica subsp. indica.</title>
        <authorList>
            <person name="Tamas I."/>
            <person name="Dedysh S.N."/>
            <person name="Liesack W."/>
            <person name="Stott M.B."/>
            <person name="Alam M."/>
            <person name="Murrell J.C."/>
            <person name="Dunfield P.F."/>
        </authorList>
    </citation>
    <scope>NUCLEOTIDE SEQUENCE [LARGE SCALE GENOMIC DNA]</scope>
    <source>
        <strain>ATCC 9039 / DSM 1715 / NCIMB 8712</strain>
    </source>
</reference>
<name>ISPH_BEII9</name>
<keyword id="KW-0004">4Fe-4S</keyword>
<keyword id="KW-0408">Iron</keyword>
<keyword id="KW-0411">Iron-sulfur</keyword>
<keyword id="KW-0414">Isoprene biosynthesis</keyword>
<keyword id="KW-0479">Metal-binding</keyword>
<keyword id="KW-0560">Oxidoreductase</keyword>
<keyword id="KW-1185">Reference proteome</keyword>